<gene>
    <name type="primary">RAT1</name>
    <name type="ordered locus">CAGL0L10120g</name>
</gene>
<name>XRN2_CANGA</name>
<evidence type="ECO:0000250" key="1"/>
<evidence type="ECO:0000250" key="2">
    <source>
        <dbReference type="UniProtKB" id="P40848"/>
    </source>
</evidence>
<evidence type="ECO:0000250" key="3">
    <source>
        <dbReference type="UniProtKB" id="Q02792"/>
    </source>
</evidence>
<evidence type="ECO:0000255" key="4"/>
<evidence type="ECO:0000256" key="5">
    <source>
        <dbReference type="SAM" id="MobiDB-lite"/>
    </source>
</evidence>
<evidence type="ECO:0000305" key="6"/>
<keyword id="KW-0175">Coiled coil</keyword>
<keyword id="KW-0269">Exonuclease</keyword>
<keyword id="KW-0378">Hydrolase</keyword>
<keyword id="KW-0507">mRNA processing</keyword>
<keyword id="KW-0540">Nuclease</keyword>
<keyword id="KW-0539">Nucleus</keyword>
<keyword id="KW-1185">Reference proteome</keyword>
<keyword id="KW-0698">rRNA processing</keyword>
<keyword id="KW-0804">Transcription</keyword>
<keyword id="KW-0805">Transcription regulation</keyword>
<keyword id="KW-0806">Transcription termination</keyword>
<protein>
    <recommendedName>
        <fullName>5'-3' exoribonuclease 2</fullName>
        <ecNumber>3.1.13.-</ecNumber>
    </recommendedName>
</protein>
<feature type="initiator methionine" description="Removed" evidence="1">
    <location>
        <position position="1"/>
    </location>
</feature>
<feature type="chain" id="PRO_0000249921" description="5'-3' exoribonuclease 2">
    <location>
        <begin position="2"/>
        <end position="1018"/>
    </location>
</feature>
<feature type="region of interest" description="Disordered" evidence="5">
    <location>
        <begin position="402"/>
        <end position="424"/>
    </location>
</feature>
<feature type="region of interest" description="Disordered" evidence="5">
    <location>
        <begin position="519"/>
        <end position="549"/>
    </location>
</feature>
<feature type="region of interest" description="Disordered" evidence="5">
    <location>
        <begin position="939"/>
        <end position="1018"/>
    </location>
</feature>
<feature type="coiled-coil region" evidence="4">
    <location>
        <begin position="121"/>
        <end position="147"/>
    </location>
</feature>
<feature type="coiled-coil region" evidence="4">
    <location>
        <begin position="468"/>
        <end position="541"/>
    </location>
</feature>
<feature type="compositionally biased region" description="Basic and acidic residues" evidence="5">
    <location>
        <begin position="519"/>
        <end position="534"/>
    </location>
</feature>
<feature type="compositionally biased region" description="Basic and acidic residues" evidence="5">
    <location>
        <begin position="948"/>
        <end position="984"/>
    </location>
</feature>
<feature type="compositionally biased region" description="Low complexity" evidence="5">
    <location>
        <begin position="997"/>
        <end position="1018"/>
    </location>
</feature>
<comment type="function">
    <text evidence="2 3">Possesses 5'-&gt;3' exoribonuclease activity (By similarity). Required for the processing of nuclear mRNA and rRNA precursors. May promote the termination of transcription by RNA polymerase II (By similarity). Essential for vegetative cell growth and chromosome segregation (By similarity).</text>
</comment>
<comment type="subunit">
    <text evidence="2">Interacts with RAI1; the interaction is direct, stabilizes RAT1 protein structure and may stimulate its exoribonuclease activity (By similarity). The interaction also stimulates RAI1 pyrophosphohydrolase activity, probably by recruiting it to mRNA substrates (By similarity).</text>
</comment>
<comment type="subcellular location">
    <subcellularLocation>
        <location evidence="1">Nucleus</location>
    </subcellularLocation>
</comment>
<comment type="similarity">
    <text evidence="6">Belongs to the 5'-3' exonuclease family. XRN2/RAT1 subfamily.</text>
</comment>
<accession>Q6FKN6</accession>
<dbReference type="EC" id="3.1.13.-"/>
<dbReference type="EMBL" id="CR380958">
    <property type="protein sequence ID" value="CAG62182.1"/>
    <property type="molecule type" value="Genomic_DNA"/>
</dbReference>
<dbReference type="RefSeq" id="XP_449208.1">
    <property type="nucleotide sequence ID" value="XM_449208.1"/>
</dbReference>
<dbReference type="SMR" id="Q6FKN6"/>
<dbReference type="FunCoup" id="Q6FKN6">
    <property type="interactions" value="1172"/>
</dbReference>
<dbReference type="STRING" id="284593.Q6FKN6"/>
<dbReference type="EnsemblFungi" id="CAGL0L10120g-T">
    <property type="protein sequence ID" value="CAGL0L10120g-T-p1"/>
    <property type="gene ID" value="CAGL0L10120g"/>
</dbReference>
<dbReference type="KEGG" id="cgr:2891058"/>
<dbReference type="CGD" id="CAL0135840">
    <property type="gene designation" value="CAGL0L10120g"/>
</dbReference>
<dbReference type="VEuPathDB" id="FungiDB:B1J91_L10120g"/>
<dbReference type="VEuPathDB" id="FungiDB:CAGL0L10120g"/>
<dbReference type="eggNOG" id="KOG2044">
    <property type="taxonomic scope" value="Eukaryota"/>
</dbReference>
<dbReference type="HOGENOM" id="CLU_006038_1_1_1"/>
<dbReference type="InParanoid" id="Q6FKN6"/>
<dbReference type="OMA" id="ITHDMVV"/>
<dbReference type="Proteomes" id="UP000002428">
    <property type="component" value="Chromosome L"/>
</dbReference>
<dbReference type="GO" id="GO:0090730">
    <property type="term" value="C:Las1 complex"/>
    <property type="evidence" value="ECO:0007669"/>
    <property type="project" value="EnsemblFungi"/>
</dbReference>
<dbReference type="GO" id="GO:0110103">
    <property type="term" value="C:RNA polymerase II termination complex"/>
    <property type="evidence" value="ECO:0007669"/>
    <property type="project" value="EnsemblFungi"/>
</dbReference>
<dbReference type="GO" id="GO:0004534">
    <property type="term" value="F:5'-3' RNA exonuclease activity"/>
    <property type="evidence" value="ECO:0007669"/>
    <property type="project" value="EnsemblFungi"/>
</dbReference>
<dbReference type="GO" id="GO:0019843">
    <property type="term" value="F:rRNA binding"/>
    <property type="evidence" value="ECO:0007669"/>
    <property type="project" value="EnsemblFungi"/>
</dbReference>
<dbReference type="GO" id="GO:0000448">
    <property type="term" value="P:cleavage in ITS2 between 5.8S rRNA and LSU-rRNA of tricistronic rRNA transcript (SSU-rRNA, 5.8S rRNA, LSU-rRNA)"/>
    <property type="evidence" value="ECO:0007669"/>
    <property type="project" value="EnsemblFungi"/>
</dbReference>
<dbReference type="GO" id="GO:0000398">
    <property type="term" value="P:mRNA splicing, via spliceosome"/>
    <property type="evidence" value="ECO:0007669"/>
    <property type="project" value="EnsemblFungi"/>
</dbReference>
<dbReference type="GO" id="GO:0110155">
    <property type="term" value="P:NAD-cap decapping"/>
    <property type="evidence" value="ECO:0007669"/>
    <property type="project" value="EnsemblFungi"/>
</dbReference>
<dbReference type="GO" id="GO:0034244">
    <property type="term" value="P:negative regulation of transcription elongation by RNA polymerase II"/>
    <property type="evidence" value="ECO:0007669"/>
    <property type="project" value="EnsemblFungi"/>
</dbReference>
<dbReference type="GO" id="GO:0071028">
    <property type="term" value="P:nuclear mRNA surveillance"/>
    <property type="evidence" value="ECO:0007669"/>
    <property type="project" value="EnsemblFungi"/>
</dbReference>
<dbReference type="GO" id="GO:0071035">
    <property type="term" value="P:nuclear polyadenylation-dependent rRNA catabolic process"/>
    <property type="evidence" value="ECO:0007669"/>
    <property type="project" value="EnsemblFungi"/>
</dbReference>
<dbReference type="GO" id="GO:1904595">
    <property type="term" value="P:positive regulation of termination of RNA polymerase II transcription"/>
    <property type="evidence" value="ECO:0007669"/>
    <property type="project" value="EnsemblFungi"/>
</dbReference>
<dbReference type="GO" id="GO:0043144">
    <property type="term" value="P:sno(s)RNA processing"/>
    <property type="evidence" value="ECO:0007669"/>
    <property type="project" value="EnsemblFungi"/>
</dbReference>
<dbReference type="GO" id="GO:0030847">
    <property type="term" value="P:termination of RNA polymerase II transcription, exosome-dependent"/>
    <property type="evidence" value="ECO:0007669"/>
    <property type="project" value="EnsemblFungi"/>
</dbReference>
<dbReference type="GO" id="GO:0030846">
    <property type="term" value="P:termination of RNA polymerase II transcription, poly(A)-coupled"/>
    <property type="evidence" value="ECO:0007669"/>
    <property type="project" value="EnsemblFungi"/>
</dbReference>
<dbReference type="CDD" id="cd18673">
    <property type="entry name" value="PIN_XRN1-2-like"/>
    <property type="match status" value="1"/>
</dbReference>
<dbReference type="FunFam" id="1.25.40.1050:FF:000002">
    <property type="entry name" value="5'-3' exoribonuclease"/>
    <property type="match status" value="1"/>
</dbReference>
<dbReference type="FunFam" id="3.40.50.12390:FF:000003">
    <property type="entry name" value="5'-3' exoribonuclease"/>
    <property type="match status" value="1"/>
</dbReference>
<dbReference type="FunFam" id="3.40.50.12390:FF:000005">
    <property type="entry name" value="5'-3' exoribonuclease 2"/>
    <property type="match status" value="1"/>
</dbReference>
<dbReference type="Gene3D" id="1.25.40.1050">
    <property type="match status" value="1"/>
</dbReference>
<dbReference type="Gene3D" id="3.40.50.12390">
    <property type="match status" value="1"/>
</dbReference>
<dbReference type="InterPro" id="IPR027073">
    <property type="entry name" value="5_3_exoribonuclease"/>
</dbReference>
<dbReference type="InterPro" id="IPR041412">
    <property type="entry name" value="Xrn1_helical"/>
</dbReference>
<dbReference type="InterPro" id="IPR004859">
    <property type="entry name" value="Xrn1_N"/>
</dbReference>
<dbReference type="InterPro" id="IPR017151">
    <property type="entry name" value="Xrn2/3/4"/>
</dbReference>
<dbReference type="PANTHER" id="PTHR12341:SF41">
    <property type="entry name" value="5'-3' EXORIBONUCLEASE 2"/>
    <property type="match status" value="1"/>
</dbReference>
<dbReference type="PANTHER" id="PTHR12341">
    <property type="entry name" value="5'-&gt;3' EXORIBONUCLEASE"/>
    <property type="match status" value="1"/>
</dbReference>
<dbReference type="Pfam" id="PF17846">
    <property type="entry name" value="XRN_M"/>
    <property type="match status" value="2"/>
</dbReference>
<dbReference type="Pfam" id="PF03159">
    <property type="entry name" value="XRN_N"/>
    <property type="match status" value="1"/>
</dbReference>
<dbReference type="PIRSF" id="PIRSF037239">
    <property type="entry name" value="Exonuclease_Xrn2"/>
    <property type="match status" value="1"/>
</dbReference>
<reference key="1">
    <citation type="journal article" date="2004" name="Nature">
        <title>Genome evolution in yeasts.</title>
        <authorList>
            <person name="Dujon B."/>
            <person name="Sherman D."/>
            <person name="Fischer G."/>
            <person name="Durrens P."/>
            <person name="Casaregola S."/>
            <person name="Lafontaine I."/>
            <person name="de Montigny J."/>
            <person name="Marck C."/>
            <person name="Neuveglise C."/>
            <person name="Talla E."/>
            <person name="Goffard N."/>
            <person name="Frangeul L."/>
            <person name="Aigle M."/>
            <person name="Anthouard V."/>
            <person name="Babour A."/>
            <person name="Barbe V."/>
            <person name="Barnay S."/>
            <person name="Blanchin S."/>
            <person name="Beckerich J.-M."/>
            <person name="Beyne E."/>
            <person name="Bleykasten C."/>
            <person name="Boisrame A."/>
            <person name="Boyer J."/>
            <person name="Cattolico L."/>
            <person name="Confanioleri F."/>
            <person name="de Daruvar A."/>
            <person name="Despons L."/>
            <person name="Fabre E."/>
            <person name="Fairhead C."/>
            <person name="Ferry-Dumazet H."/>
            <person name="Groppi A."/>
            <person name="Hantraye F."/>
            <person name="Hennequin C."/>
            <person name="Jauniaux N."/>
            <person name="Joyet P."/>
            <person name="Kachouri R."/>
            <person name="Kerrest A."/>
            <person name="Koszul R."/>
            <person name="Lemaire M."/>
            <person name="Lesur I."/>
            <person name="Ma L."/>
            <person name="Muller H."/>
            <person name="Nicaud J.-M."/>
            <person name="Nikolski M."/>
            <person name="Oztas S."/>
            <person name="Ozier-Kalogeropoulos O."/>
            <person name="Pellenz S."/>
            <person name="Potier S."/>
            <person name="Richard G.-F."/>
            <person name="Straub M.-L."/>
            <person name="Suleau A."/>
            <person name="Swennen D."/>
            <person name="Tekaia F."/>
            <person name="Wesolowski-Louvel M."/>
            <person name="Westhof E."/>
            <person name="Wirth B."/>
            <person name="Zeniou-Meyer M."/>
            <person name="Zivanovic Y."/>
            <person name="Bolotin-Fukuhara M."/>
            <person name="Thierry A."/>
            <person name="Bouchier C."/>
            <person name="Caudron B."/>
            <person name="Scarpelli C."/>
            <person name="Gaillardin C."/>
            <person name="Weissenbach J."/>
            <person name="Wincker P."/>
            <person name="Souciet J.-L."/>
        </authorList>
    </citation>
    <scope>NUCLEOTIDE SEQUENCE [LARGE SCALE GENOMIC DNA]</scope>
    <source>
        <strain>ATCC 2001 / BCRC 20586 / JCM 3761 / NBRC 0622 / NRRL Y-65 / CBS 138</strain>
    </source>
</reference>
<proteinExistence type="inferred from homology"/>
<sequence>MGVPSFFRWLSRKYPKIISPVLEEPQQLVDGVALPIDYAGPNPNGELDNLYLDMNGIVHPCSHPENKPPPETEDDMLLAVFEYTNRVLNMARPRKVLVIAVDGVAPRAKMNQQRSRRFRSARDAEIENEAREEIMRQKEQLGQIIDDSVKNKKTWDSNAITPGTPFMDKLAIALRYWTAFKLATDPGWKNLQVIISDATVPGEGEHKIMNFIRSQRADPEYNPNTTHCIYGLDADLIFLGLATHEPHFKILREDVFAQDNRKRNNVKDTIDMTDEEKDLIRKQDSEKPFLWLHISVLREYLSAELWTPKLPFPFDLERAIDDWVFMCFFCGNDFLPHLPCLDVRENSIDILLDIWKSILPRLKTYMTCDGKLNLESVEMVLKELGNREGDIFKTRHIQEIRKKEANERRKQQKQQNVSTGQDRHPTKFNEQLQMYDTNGSLAKGSWNLTTSDMVRYKKELMLANEGDENSIKIIEEVSERNNSLMKEIQSEMTPEDYKGNNNNFTAAELLKKKLNARKRELEKEKENEEQERASKQPKISETPDESDLTEEIEADVIAEVEDETTPDEKDTDSIITEVPEISNGGITSGVIDTDEAVKLFEPGYHDRYYIEKFHIEPNQIPALSKHMVKCYIEGVSWVLMYYYQGCASWTWYYPYHYAPLAEDFVDFHDLDIKFELGEPFLPYEQLMSVLPAASGHNLPEVFRPLMSSEDSEIIDFYPTEFPIDMNGKKMSWQGIALLPFIDETRLLTATRNQYKFLSEDEKRRNTRNDPVLLISNKNVNYEKFAKRLYKKGHEDNFQLVFHHFKSSLAGIVSTDTEGFKLHAKLPCPIQSGALPELSTNLFLKMQYKLLPLPSANKSLILNGFIPSEPMLTQHDFDSIVYKYGTRGFQRNQRNFGMEMKQNIVPVGPSGTTQYKPRIGGYRSFFYFGQLNQQMHQHNQVYQQNQAPTHDRYRNDRSDRGGRGYGRPDHDRGDYRGDYRGDGYRGGHRGGYRGGSRSRGPSSRGISSRGYSGPSRYNR</sequence>
<organism>
    <name type="scientific">Candida glabrata (strain ATCC 2001 / BCRC 20586 / JCM 3761 / NBRC 0622 / NRRL Y-65 / CBS 138)</name>
    <name type="common">Yeast</name>
    <name type="synonym">Nakaseomyces glabratus</name>
    <dbReference type="NCBI Taxonomy" id="284593"/>
    <lineage>
        <taxon>Eukaryota</taxon>
        <taxon>Fungi</taxon>
        <taxon>Dikarya</taxon>
        <taxon>Ascomycota</taxon>
        <taxon>Saccharomycotina</taxon>
        <taxon>Saccharomycetes</taxon>
        <taxon>Saccharomycetales</taxon>
        <taxon>Saccharomycetaceae</taxon>
        <taxon>Nakaseomyces</taxon>
    </lineage>
</organism>